<feature type="chain" id="PRO_0000253488" description="Metallothionein-3">
    <location>
        <begin position="1"/>
        <end position="68"/>
    </location>
</feature>
<feature type="region of interest" description="Beta">
    <location>
        <begin position="1"/>
        <end position="30"/>
    </location>
</feature>
<feature type="region of interest" description="Alpha">
    <location>
        <begin position="31"/>
        <end position="68"/>
    </location>
</feature>
<feature type="binding site" evidence="2">
    <location>
        <position position="6"/>
    </location>
    <ligand>
        <name>a divalent metal cation</name>
        <dbReference type="ChEBI" id="CHEBI:60240"/>
        <label>1</label>
        <note>in cluster B</note>
    </ligand>
</feature>
<feature type="binding site" evidence="2">
    <location>
        <position position="8"/>
    </location>
    <ligand>
        <name>a divalent metal cation</name>
        <dbReference type="ChEBI" id="CHEBI:60240"/>
        <label>1</label>
        <note>in cluster B</note>
    </ligand>
</feature>
<feature type="binding site" evidence="2">
    <location>
        <position position="8"/>
    </location>
    <ligand>
        <name>a divalent metal cation</name>
        <dbReference type="ChEBI" id="CHEBI:60240"/>
        <label>2</label>
        <note>in cluster B</note>
    </ligand>
</feature>
<feature type="binding site" evidence="2">
    <location>
        <position position="14"/>
    </location>
    <ligand>
        <name>a divalent metal cation</name>
        <dbReference type="ChEBI" id="CHEBI:60240"/>
        <label>2</label>
        <note>in cluster B</note>
    </ligand>
</feature>
<feature type="binding site" evidence="2">
    <location>
        <position position="16"/>
    </location>
    <ligand>
        <name>a divalent metal cation</name>
        <dbReference type="ChEBI" id="CHEBI:60240"/>
        <label>2</label>
        <note>in cluster B</note>
    </ligand>
</feature>
<feature type="binding site" evidence="2">
    <location>
        <position position="16"/>
    </location>
    <ligand>
        <name>a divalent metal cation</name>
        <dbReference type="ChEBI" id="CHEBI:60240"/>
        <label>3</label>
        <note>in cluster B</note>
    </ligand>
</feature>
<feature type="binding site" evidence="2">
    <location>
        <position position="20"/>
    </location>
    <ligand>
        <name>a divalent metal cation</name>
        <dbReference type="ChEBI" id="CHEBI:60240"/>
        <label>3</label>
        <note>in cluster B</note>
    </ligand>
</feature>
<feature type="binding site" evidence="2">
    <location>
        <position position="22"/>
    </location>
    <ligand>
        <name>a divalent metal cation</name>
        <dbReference type="ChEBI" id="CHEBI:60240"/>
        <label>1</label>
        <note>in cluster B</note>
    </ligand>
</feature>
<feature type="binding site" evidence="2">
    <location>
        <position position="25"/>
    </location>
    <ligand>
        <name>a divalent metal cation</name>
        <dbReference type="ChEBI" id="CHEBI:60240"/>
        <label>1</label>
        <note>in cluster B</note>
    </ligand>
</feature>
<feature type="binding site" evidence="2">
    <location>
        <position position="25"/>
    </location>
    <ligand>
        <name>a divalent metal cation</name>
        <dbReference type="ChEBI" id="CHEBI:60240"/>
        <label>3</label>
        <note>in cluster B</note>
    </ligand>
</feature>
<feature type="binding site" evidence="2">
    <location>
        <position position="27"/>
    </location>
    <ligand>
        <name>a divalent metal cation</name>
        <dbReference type="ChEBI" id="CHEBI:60240"/>
        <label>2</label>
        <note>in cluster B</note>
    </ligand>
</feature>
<feature type="binding site" evidence="2">
    <location>
        <position position="34"/>
    </location>
    <ligand>
        <name>a divalent metal cation</name>
        <dbReference type="ChEBI" id="CHEBI:60240"/>
        <label>4</label>
        <note>in cluster A</note>
    </ligand>
</feature>
<feature type="binding site" evidence="2">
    <location>
        <position position="35"/>
    </location>
    <ligand>
        <name>a divalent metal cation</name>
        <dbReference type="ChEBI" id="CHEBI:60240"/>
        <label>4</label>
        <note>in cluster A</note>
    </ligand>
</feature>
<feature type="binding site" evidence="2">
    <location>
        <position position="35"/>
    </location>
    <ligand>
        <name>a divalent metal cation</name>
        <dbReference type="ChEBI" id="CHEBI:60240"/>
        <label>5</label>
        <note>in cluster A</note>
    </ligand>
</feature>
<feature type="binding site" evidence="2">
    <location>
        <position position="37"/>
    </location>
    <ligand>
        <name>a divalent metal cation</name>
        <dbReference type="ChEBI" id="CHEBI:60240"/>
        <label>5</label>
        <note>in cluster A</note>
    </ligand>
</feature>
<feature type="binding site" evidence="2">
    <location>
        <position position="38"/>
    </location>
    <ligand>
        <name>a divalent metal cation</name>
        <dbReference type="ChEBI" id="CHEBI:60240"/>
        <label>5</label>
        <note>in cluster A</note>
    </ligand>
</feature>
<feature type="binding site" evidence="2">
    <location>
        <position position="38"/>
    </location>
    <ligand>
        <name>a divalent metal cation</name>
        <dbReference type="ChEBI" id="CHEBI:60240"/>
        <label>6</label>
        <note>in cluster A</note>
    </ligand>
</feature>
<feature type="binding site" evidence="2">
    <location>
        <position position="42"/>
    </location>
    <ligand>
        <name>a divalent metal cation</name>
        <dbReference type="ChEBI" id="CHEBI:60240"/>
        <label>6</label>
        <note>in cluster A</note>
    </ligand>
</feature>
<feature type="binding site" evidence="2">
    <location>
        <position position="45"/>
    </location>
    <ligand>
        <name>a divalent metal cation</name>
        <dbReference type="ChEBI" id="CHEBI:60240"/>
        <label>4</label>
        <note>in cluster A</note>
    </ligand>
</feature>
<feature type="binding site" evidence="2">
    <location>
        <position position="45"/>
    </location>
    <ligand>
        <name>a divalent metal cation</name>
        <dbReference type="ChEBI" id="CHEBI:60240"/>
        <label>6</label>
        <note>in cluster A</note>
    </ligand>
</feature>
<feature type="binding site" evidence="2">
    <location>
        <position position="49"/>
    </location>
    <ligand>
        <name>a divalent metal cation</name>
        <dbReference type="ChEBI" id="CHEBI:60240"/>
        <label>4</label>
        <note>in cluster A</note>
    </ligand>
</feature>
<feature type="binding site" evidence="2">
    <location>
        <position position="51"/>
    </location>
    <ligand>
        <name>a divalent metal cation</name>
        <dbReference type="ChEBI" id="CHEBI:60240"/>
        <label>5</label>
        <note>in cluster A</note>
    </ligand>
</feature>
<feature type="binding site" evidence="2">
    <location>
        <position position="51"/>
    </location>
    <ligand>
        <name>a divalent metal cation</name>
        <dbReference type="ChEBI" id="CHEBI:60240"/>
        <label>7</label>
        <note>in cluster A</note>
    </ligand>
</feature>
<feature type="binding site" evidence="2">
    <location>
        <position position="64"/>
    </location>
    <ligand>
        <name>a divalent metal cation</name>
        <dbReference type="ChEBI" id="CHEBI:60240"/>
        <label>7</label>
        <note>in cluster A</note>
    </ligand>
</feature>
<feature type="binding site" evidence="2">
    <location>
        <position position="66"/>
    </location>
    <ligand>
        <name>a divalent metal cation</name>
        <dbReference type="ChEBI" id="CHEBI:60240"/>
        <label>7</label>
        <note>in cluster A</note>
    </ligand>
</feature>
<feature type="binding site" evidence="2">
    <location>
        <position position="67"/>
    </location>
    <ligand>
        <name>a divalent metal cation</name>
        <dbReference type="ChEBI" id="CHEBI:60240"/>
        <label>6</label>
        <note>in cluster A</note>
    </ligand>
</feature>
<feature type="binding site" evidence="2">
    <location>
        <position position="67"/>
    </location>
    <ligand>
        <name>a divalent metal cation</name>
        <dbReference type="ChEBI" id="CHEBI:60240"/>
        <label>7</label>
        <note>in cluster A</note>
    </ligand>
</feature>
<feature type="modified residue" description="N-acetylmethionine" evidence="4">
    <location>
        <position position="1"/>
    </location>
</feature>
<feature type="modified residue" description="Phosphoserine" evidence="3">
    <location>
        <position position="33"/>
    </location>
</feature>
<protein>
    <recommendedName>
        <fullName>Metallothionein-3</fullName>
        <shortName>MT-3</shortName>
    </recommendedName>
    <alternativeName>
        <fullName>Metallothionein-III</fullName>
        <shortName>MT-III</shortName>
    </alternativeName>
</protein>
<evidence type="ECO:0000250" key="1"/>
<evidence type="ECO:0000250" key="2">
    <source>
        <dbReference type="UniProtKB" id="P02795"/>
    </source>
</evidence>
<evidence type="ECO:0000250" key="3">
    <source>
        <dbReference type="UniProtKB" id="P28184"/>
    </source>
</evidence>
<evidence type="ECO:0000250" key="4">
    <source>
        <dbReference type="UniProtKB" id="P37359"/>
    </source>
</evidence>
<evidence type="ECO:0000305" key="5"/>
<reference key="1">
    <citation type="journal article" date="2006" name="Gansu Nong Ye Da Xue Xue Bao">
        <title>Bos grunniens metallothionein-3.</title>
        <authorList>
            <person name="Liu B.P."/>
            <person name="Wu J.P."/>
            <person name="Ma B.Y."/>
            <person name="Zhang L.P."/>
            <person name="Yang L."/>
            <person name="Gao F.Q."/>
        </authorList>
    </citation>
    <scope>NUCLEOTIDE SEQUENCE [MRNA]</scope>
</reference>
<keyword id="KW-0007">Acetylation</keyword>
<keyword id="KW-0186">Copper</keyword>
<keyword id="KW-0479">Metal-binding</keyword>
<keyword id="KW-0480">Metal-thiolate cluster</keyword>
<keyword id="KW-0597">Phosphoprotein</keyword>
<keyword id="KW-1185">Reference proteome</keyword>
<keyword id="KW-0862">Zinc</keyword>
<accession>Q2MJS5</accession>
<comment type="function">
    <text evidence="1">Binds heavy metals. Contains five zinc and one copper atoms per polypeptide chain and only a negligible amount of cadmium (By similarity).</text>
</comment>
<comment type="similarity">
    <text evidence="5">Belongs to the metallothionein superfamily. Type 1 family.</text>
</comment>
<dbReference type="EMBL" id="DQ492300">
    <property type="protein sequence ID" value="ABC50101.1"/>
    <property type="molecule type" value="mRNA"/>
</dbReference>
<dbReference type="SMR" id="Q2MJS5"/>
<dbReference type="Ensembl" id="ENSBGRT00000041618.1">
    <property type="protein sequence ID" value="ENSBGRP00000035971.1"/>
    <property type="gene ID" value="ENSBGRG00000022541.1"/>
</dbReference>
<dbReference type="GeneTree" id="ENSGT00950000182967"/>
<dbReference type="Proteomes" id="UP000694520">
    <property type="component" value="Chromosome 20"/>
</dbReference>
<dbReference type="GO" id="GO:0016234">
    <property type="term" value="C:inclusion body"/>
    <property type="evidence" value="ECO:0000250"/>
    <property type="project" value="UniProtKB"/>
</dbReference>
<dbReference type="GO" id="GO:0005634">
    <property type="term" value="C:nucleus"/>
    <property type="evidence" value="ECO:0000250"/>
    <property type="project" value="UniProtKB"/>
</dbReference>
<dbReference type="GO" id="GO:0048471">
    <property type="term" value="C:perinuclear region of cytoplasm"/>
    <property type="evidence" value="ECO:0000250"/>
    <property type="project" value="UniProtKB"/>
</dbReference>
<dbReference type="GO" id="GO:0008021">
    <property type="term" value="C:synaptic vesicle"/>
    <property type="evidence" value="ECO:0000250"/>
    <property type="project" value="UniProtKB"/>
</dbReference>
<dbReference type="GO" id="GO:0046870">
    <property type="term" value="F:cadmium ion binding"/>
    <property type="evidence" value="ECO:0000250"/>
    <property type="project" value="UniProtKB"/>
</dbReference>
<dbReference type="GO" id="GO:0005507">
    <property type="term" value="F:copper ion binding"/>
    <property type="evidence" value="ECO:0000250"/>
    <property type="project" value="UniProtKB"/>
</dbReference>
<dbReference type="GO" id="GO:0140487">
    <property type="term" value="F:metal ion sequestering activity"/>
    <property type="evidence" value="ECO:0000250"/>
    <property type="project" value="UniProtKB"/>
</dbReference>
<dbReference type="GO" id="GO:0030295">
    <property type="term" value="F:protein kinase activator activity"/>
    <property type="evidence" value="ECO:0000250"/>
    <property type="project" value="UniProtKB"/>
</dbReference>
<dbReference type="GO" id="GO:0008270">
    <property type="term" value="F:zinc ion binding"/>
    <property type="evidence" value="ECO:0000250"/>
    <property type="project" value="UniProtKB"/>
</dbReference>
<dbReference type="GO" id="GO:0032148">
    <property type="term" value="P:activation of protein kinase B activity"/>
    <property type="evidence" value="ECO:0000250"/>
    <property type="project" value="UniProtKB"/>
</dbReference>
<dbReference type="GO" id="GO:1990748">
    <property type="term" value="P:cellular detoxification"/>
    <property type="evidence" value="ECO:0000250"/>
    <property type="project" value="UniProtKB"/>
</dbReference>
<dbReference type="GO" id="GO:0071276">
    <property type="term" value="P:cellular response to cadmium ion"/>
    <property type="evidence" value="ECO:0007669"/>
    <property type="project" value="TreeGrafter"/>
</dbReference>
<dbReference type="GO" id="GO:0071280">
    <property type="term" value="P:cellular response to copper ion"/>
    <property type="evidence" value="ECO:0007669"/>
    <property type="project" value="TreeGrafter"/>
</dbReference>
<dbReference type="GO" id="GO:0071456">
    <property type="term" value="P:cellular response to hypoxia"/>
    <property type="evidence" value="ECO:0007669"/>
    <property type="project" value="Ensembl"/>
</dbReference>
<dbReference type="GO" id="GO:0034614">
    <property type="term" value="P:cellular response to reactive oxygen species"/>
    <property type="evidence" value="ECO:0000250"/>
    <property type="project" value="UniProtKB"/>
</dbReference>
<dbReference type="GO" id="GO:0071294">
    <property type="term" value="P:cellular response to zinc ion"/>
    <property type="evidence" value="ECO:0007669"/>
    <property type="project" value="TreeGrafter"/>
</dbReference>
<dbReference type="GO" id="GO:0071585">
    <property type="term" value="P:detoxification of cadmium ion"/>
    <property type="evidence" value="ECO:0007669"/>
    <property type="project" value="Ensembl"/>
</dbReference>
<dbReference type="GO" id="GO:0010273">
    <property type="term" value="P:detoxification of copper ion"/>
    <property type="evidence" value="ECO:0007669"/>
    <property type="project" value="TreeGrafter"/>
</dbReference>
<dbReference type="GO" id="GO:0006112">
    <property type="term" value="P:energy reserve metabolic process"/>
    <property type="evidence" value="ECO:0000250"/>
    <property type="project" value="UniProtKB"/>
</dbReference>
<dbReference type="GO" id="GO:0006882">
    <property type="term" value="P:intracellular zinc ion homeostasis"/>
    <property type="evidence" value="ECO:0000250"/>
    <property type="project" value="UniProtKB"/>
</dbReference>
<dbReference type="GO" id="GO:0033210">
    <property type="term" value="P:leptin-mediated signaling pathway"/>
    <property type="evidence" value="ECO:0000250"/>
    <property type="project" value="UniProtKB"/>
</dbReference>
<dbReference type="GO" id="GO:0030517">
    <property type="term" value="P:negative regulation of axon extension"/>
    <property type="evidence" value="ECO:0000250"/>
    <property type="project" value="UniProtKB"/>
</dbReference>
<dbReference type="GO" id="GO:0030308">
    <property type="term" value="P:negative regulation of cell growth"/>
    <property type="evidence" value="ECO:0000250"/>
    <property type="project" value="UniProtKB"/>
</dbReference>
<dbReference type="GO" id="GO:0043524">
    <property type="term" value="P:negative regulation of neuron apoptotic process"/>
    <property type="evidence" value="ECO:0000250"/>
    <property type="project" value="UniProtKB"/>
</dbReference>
<dbReference type="GO" id="GO:0051354">
    <property type="term" value="P:negative regulation of oxidoreductase activity"/>
    <property type="evidence" value="ECO:0000250"/>
    <property type="project" value="UniProtKB"/>
</dbReference>
<dbReference type="GO" id="GO:0045893">
    <property type="term" value="P:positive regulation of DNA-templated transcription"/>
    <property type="evidence" value="ECO:0000250"/>
    <property type="project" value="UniProtKB"/>
</dbReference>
<dbReference type="GO" id="GO:0070374">
    <property type="term" value="P:positive regulation of ERK1 and ERK2 cascade"/>
    <property type="evidence" value="ECO:0000250"/>
    <property type="project" value="UniProtKB"/>
</dbReference>
<dbReference type="GO" id="GO:0010628">
    <property type="term" value="P:positive regulation of gene expression"/>
    <property type="evidence" value="ECO:0000250"/>
    <property type="project" value="UniProtKB"/>
</dbReference>
<dbReference type="GO" id="GO:2000376">
    <property type="term" value="P:positive regulation of oxygen metabolic process"/>
    <property type="evidence" value="ECO:0000250"/>
    <property type="project" value="UniProtKB"/>
</dbReference>
<dbReference type="GO" id="GO:0001934">
    <property type="term" value="P:positive regulation of protein phosphorylation"/>
    <property type="evidence" value="ECO:0000250"/>
    <property type="project" value="UniProtKB"/>
</dbReference>
<dbReference type="GO" id="GO:0030949">
    <property type="term" value="P:positive regulation of vascular endothelial growth factor receptor signaling pathway"/>
    <property type="evidence" value="ECO:0000250"/>
    <property type="project" value="UniProtKB"/>
</dbReference>
<dbReference type="GO" id="GO:0050821">
    <property type="term" value="P:protein stabilization"/>
    <property type="evidence" value="ECO:0000250"/>
    <property type="project" value="UniProtKB"/>
</dbReference>
<dbReference type="GO" id="GO:0032095">
    <property type="term" value="P:regulation of response to food"/>
    <property type="evidence" value="ECO:0000250"/>
    <property type="project" value="UniProtKB"/>
</dbReference>
<dbReference type="GO" id="GO:0019430">
    <property type="term" value="P:removal of superoxide radicals"/>
    <property type="evidence" value="ECO:0000250"/>
    <property type="project" value="UniProtKB"/>
</dbReference>
<dbReference type="GO" id="GO:0001666">
    <property type="term" value="P:response to hypoxia"/>
    <property type="evidence" value="ECO:0000250"/>
    <property type="project" value="UniProtKB"/>
</dbReference>
<dbReference type="GO" id="GO:0006829">
    <property type="term" value="P:zinc ion transport"/>
    <property type="evidence" value="ECO:0000250"/>
    <property type="project" value="UniProtKB"/>
</dbReference>
<dbReference type="FunFam" id="4.10.10.10:FF:000001">
    <property type="entry name" value="Metallothionein"/>
    <property type="match status" value="1"/>
</dbReference>
<dbReference type="Gene3D" id="4.10.10.10">
    <property type="entry name" value="Metallothionein Isoform II"/>
    <property type="match status" value="1"/>
</dbReference>
<dbReference type="InterPro" id="IPR017854">
    <property type="entry name" value="Metalthion_dom_sf"/>
</dbReference>
<dbReference type="InterPro" id="IPR023587">
    <property type="entry name" value="Metalthion_dom_sf_vert"/>
</dbReference>
<dbReference type="InterPro" id="IPR000006">
    <property type="entry name" value="Metalthion_vert"/>
</dbReference>
<dbReference type="PANTHER" id="PTHR23299">
    <property type="entry name" value="METALLOTHIONEIN"/>
    <property type="match status" value="1"/>
</dbReference>
<dbReference type="PANTHER" id="PTHR23299:SF18">
    <property type="entry name" value="METALLOTHIONEIN-3"/>
    <property type="match status" value="1"/>
</dbReference>
<dbReference type="Pfam" id="PF00131">
    <property type="entry name" value="Metallothio"/>
    <property type="match status" value="1"/>
</dbReference>
<dbReference type="PRINTS" id="PR00860">
    <property type="entry name" value="MTVERTEBRATE"/>
</dbReference>
<dbReference type="SUPFAM" id="SSF57868">
    <property type="entry name" value="Metallothionein"/>
    <property type="match status" value="1"/>
</dbReference>
<gene>
    <name type="primary">MT3</name>
</gene>
<name>MT3_BOSMU</name>
<organism>
    <name type="scientific">Bos mutus grunniens</name>
    <name type="common">Wild yak</name>
    <name type="synonym">Bos grunniens</name>
    <dbReference type="NCBI Taxonomy" id="30521"/>
    <lineage>
        <taxon>Eukaryota</taxon>
        <taxon>Metazoa</taxon>
        <taxon>Chordata</taxon>
        <taxon>Craniata</taxon>
        <taxon>Vertebrata</taxon>
        <taxon>Euteleostomi</taxon>
        <taxon>Mammalia</taxon>
        <taxon>Eutheria</taxon>
        <taxon>Laurasiatheria</taxon>
        <taxon>Artiodactyla</taxon>
        <taxon>Ruminantia</taxon>
        <taxon>Pecora</taxon>
        <taxon>Bovidae</taxon>
        <taxon>Bovinae</taxon>
        <taxon>Bos</taxon>
    </lineage>
</organism>
<sequence>MDPETCPCPTGGSCTCSDPCKCEGCTCASSKKSCCSCCPAECEKCAKDCVCKGGEGAEAEEKKCSCCQ</sequence>
<proteinExistence type="inferred from homology"/>